<name>NHTF_NEIMB</name>
<protein>
    <recommendedName>
        <fullName evidence="3">Neisseria hypothetical transcription factor</fullName>
        <shortName evidence="3">NHTF</shortName>
    </recommendedName>
    <alternativeName>
        <fullName evidence="4">HTH-type transcriptional repressor NMB1204</fullName>
    </alternativeName>
</protein>
<reference evidence="5" key="1">
    <citation type="journal article" date="2000" name="Science">
        <title>Complete genome sequence of Neisseria meningitidis serogroup B strain MC58.</title>
        <authorList>
            <person name="Tettelin H."/>
            <person name="Saunders N.J."/>
            <person name="Heidelberg J.F."/>
            <person name="Jeffries A.C."/>
            <person name="Nelson K.E."/>
            <person name="Eisen J.A."/>
            <person name="Ketchum K.A."/>
            <person name="Hood D.W."/>
            <person name="Peden J.F."/>
            <person name="Dodson R.J."/>
            <person name="Nelson W.C."/>
            <person name="Gwinn M.L."/>
            <person name="DeBoy R.T."/>
            <person name="Peterson J.D."/>
            <person name="Hickey E.K."/>
            <person name="Haft D.H."/>
            <person name="Salzberg S.L."/>
            <person name="White O."/>
            <person name="Fleischmann R.D."/>
            <person name="Dougherty B.A."/>
            <person name="Mason T.M."/>
            <person name="Ciecko A."/>
            <person name="Parksey D.S."/>
            <person name="Blair E."/>
            <person name="Cittone H."/>
            <person name="Clark E.B."/>
            <person name="Cotton M.D."/>
            <person name="Utterback T.R."/>
            <person name="Khouri H.M."/>
            <person name="Qin H."/>
            <person name="Vamathevan J.J."/>
            <person name="Gill J."/>
            <person name="Scarlato V."/>
            <person name="Masignani V."/>
            <person name="Pizza M."/>
            <person name="Grandi G."/>
            <person name="Sun L."/>
            <person name="Smith H.O."/>
            <person name="Fraser C.M."/>
            <person name="Moxon E.R."/>
            <person name="Rappuoli R."/>
            <person name="Venter J.C."/>
        </authorList>
    </citation>
    <scope>NUCLEOTIDE SEQUENCE [LARGE SCALE GENOMIC DNA]</scope>
    <source>
        <strain>ATCC BAA-335 / MC58</strain>
    </source>
</reference>
<reference evidence="6" key="2">
    <citation type="journal article" date="2012" name="Nucleic Acids Res.">
        <title>Neisseria conserved protein DMP19 is a DNA mimic protein that prevents DNA binding to a hypothetical nitrogen-response transcription factor.</title>
        <authorList>
            <person name="Wang H.C."/>
            <person name="Ko T.P."/>
            <person name="Wu M.L."/>
            <person name="Ku S.C."/>
            <person name="Wu H.J."/>
            <person name="Wang A.H."/>
        </authorList>
    </citation>
    <scope>X-RAY CRYSTALLOGRAPHY (1.88 ANGSTROMS)</scope>
    <scope>FUNCTION</scope>
    <scope>DNA-BINDING</scope>
    <scope>ACTIVITY REGULATION</scope>
    <scope>SUBUNIT</scope>
    <scope>INTERACTION WITH DMP19</scope>
    <scope>INDUCTION</scope>
    <source>
        <strain>ATCC BAA-335 / MC58</strain>
    </source>
</reference>
<dbReference type="EMBL" id="AE002098">
    <property type="protein sequence ID" value="AAF41586.1"/>
    <property type="molecule type" value="Genomic_DNA"/>
</dbReference>
<dbReference type="PIR" id="C81110">
    <property type="entry name" value="C81110"/>
</dbReference>
<dbReference type="RefSeq" id="NP_274229.1">
    <property type="nucleotide sequence ID" value="NC_003112.2"/>
</dbReference>
<dbReference type="RefSeq" id="WP_002213537.1">
    <property type="nucleotide sequence ID" value="NC_003112.2"/>
</dbReference>
<dbReference type="PDB" id="3VK0">
    <property type="method" value="X-ray"/>
    <property type="resolution" value="1.88 A"/>
    <property type="chains" value="A/B/C=1-106"/>
</dbReference>
<dbReference type="PDBsum" id="3VK0"/>
<dbReference type="SMR" id="Q7DDD9"/>
<dbReference type="STRING" id="122586.NMB1204"/>
<dbReference type="PaxDb" id="122586-NMB1204"/>
<dbReference type="KEGG" id="nme:NMB1204"/>
<dbReference type="PATRIC" id="fig|122586.8.peg.1511"/>
<dbReference type="HOGENOM" id="CLU_066192_29_1_4"/>
<dbReference type="InParanoid" id="Q7DDD9"/>
<dbReference type="OrthoDB" id="8527856at2"/>
<dbReference type="EvolutionaryTrace" id="Q7DDD9"/>
<dbReference type="Proteomes" id="UP000000425">
    <property type="component" value="Chromosome"/>
</dbReference>
<dbReference type="GO" id="GO:0003677">
    <property type="term" value="F:DNA binding"/>
    <property type="evidence" value="ECO:0007669"/>
    <property type="project" value="InterPro"/>
</dbReference>
<dbReference type="GO" id="GO:0003700">
    <property type="term" value="F:DNA-binding transcription factor activity"/>
    <property type="evidence" value="ECO:0000318"/>
    <property type="project" value="GO_Central"/>
</dbReference>
<dbReference type="GO" id="GO:0006355">
    <property type="term" value="P:regulation of DNA-templated transcription"/>
    <property type="evidence" value="ECO:0000318"/>
    <property type="project" value="GO_Central"/>
</dbReference>
<dbReference type="CDD" id="cd00093">
    <property type="entry name" value="HTH_XRE"/>
    <property type="match status" value="1"/>
</dbReference>
<dbReference type="Gene3D" id="1.10.260.40">
    <property type="entry name" value="lambda repressor-like DNA-binding domains"/>
    <property type="match status" value="1"/>
</dbReference>
<dbReference type="InterPro" id="IPR050807">
    <property type="entry name" value="Bact_TransReg_Diox"/>
</dbReference>
<dbReference type="InterPro" id="IPR001387">
    <property type="entry name" value="Cro/C1-type_HTH"/>
</dbReference>
<dbReference type="InterPro" id="IPR010982">
    <property type="entry name" value="Lambda_DNA-bd_dom_sf"/>
</dbReference>
<dbReference type="PANTHER" id="PTHR46797">
    <property type="entry name" value="HTH-TYPE TRANSCRIPTIONAL REGULATOR"/>
    <property type="match status" value="1"/>
</dbReference>
<dbReference type="PANTHER" id="PTHR46797:SF23">
    <property type="entry name" value="HTH-TYPE TRANSCRIPTIONAL REGULATOR SUTR"/>
    <property type="match status" value="1"/>
</dbReference>
<dbReference type="Pfam" id="PF01381">
    <property type="entry name" value="HTH_3"/>
    <property type="match status" value="1"/>
</dbReference>
<dbReference type="SMART" id="SM00530">
    <property type="entry name" value="HTH_XRE"/>
    <property type="match status" value="1"/>
</dbReference>
<dbReference type="SUPFAM" id="SSF47413">
    <property type="entry name" value="lambda repressor-like DNA-binding domains"/>
    <property type="match status" value="1"/>
</dbReference>
<dbReference type="PROSITE" id="PS50943">
    <property type="entry name" value="HTH_CROC1"/>
    <property type="match status" value="1"/>
</dbReference>
<accession>Q7DDD9</accession>
<sequence>MMGNKLTLPAELPDEQDLRAVLAYNMRLFRVNKGWSQEELARQCGLDRTYVSAVERKRWNIALSNIEKMAAALGVAAYQLLLPPQERLKLMTNSADTRQMPSESGI</sequence>
<comment type="function">
    <text evidence="2">Transcriptional regulator probably involved in the response to nitrogen levels (PubMed:22373915). Down-regulates its own expression as well as the expression of the downstream gene, glnD, which encodes the [Protein-PII] uridylyltransferase, a key enzyme in the nitrogen regulation system (PubMed:22373915). Acts by binding to a specific palindromic DNA sequence (5'-TGTNANTNACA-3') in its 5'-untranslated region (PubMed:22373915).</text>
</comment>
<comment type="activity regulation">
    <text evidence="2">Repressor activity is inhibited in the presence of the DNA mimic protein DMP19, which interacts with NHTF and prevents binding of NHTF to its DNA-binding sites.</text>
</comment>
<comment type="subunit">
    <text evidence="2">Homodimer (PubMed:22373915). Can interact with the dimeric form of the DNA mimic protein DMP19 with 1:1 stoichiometry (PubMed:22373915).</text>
</comment>
<comment type="subcellular location">
    <subcellularLocation>
        <location evidence="4">Cytoplasm</location>
    </subcellularLocation>
</comment>
<comment type="induction">
    <text evidence="2">Negatively autoregulated (PubMed:22373915). Is most likely cotranscribed with glnD (PubMed:22373915).</text>
</comment>
<keyword id="KW-0002">3D-structure</keyword>
<keyword id="KW-0963">Cytoplasm</keyword>
<keyword id="KW-0238">DNA-binding</keyword>
<keyword id="KW-1185">Reference proteome</keyword>
<keyword id="KW-0678">Repressor</keyword>
<keyword id="KW-0804">Transcription</keyword>
<keyword id="KW-0805">Transcription regulation</keyword>
<feature type="chain" id="PRO_0000462353" description="Neisseria hypothetical transcription factor">
    <location>
        <begin position="1"/>
        <end position="106"/>
    </location>
</feature>
<feature type="domain" description="HTH cro/C1-type" evidence="1">
    <location>
        <begin position="26"/>
        <end position="80"/>
    </location>
</feature>
<feature type="DNA-binding region" description="H-T-H motif" evidence="1">
    <location>
        <begin position="37"/>
        <end position="56"/>
    </location>
</feature>
<proteinExistence type="evidence at protein level"/>
<organism>
    <name type="scientific">Neisseria meningitidis serogroup B (strain ATCC BAA-335 / MC58)</name>
    <dbReference type="NCBI Taxonomy" id="122586"/>
    <lineage>
        <taxon>Bacteria</taxon>
        <taxon>Pseudomonadati</taxon>
        <taxon>Pseudomonadota</taxon>
        <taxon>Betaproteobacteria</taxon>
        <taxon>Neisseriales</taxon>
        <taxon>Neisseriaceae</taxon>
        <taxon>Neisseria</taxon>
    </lineage>
</organism>
<evidence type="ECO:0000255" key="1">
    <source>
        <dbReference type="PROSITE-ProRule" id="PRU00257"/>
    </source>
</evidence>
<evidence type="ECO:0000269" key="2">
    <source>
    </source>
</evidence>
<evidence type="ECO:0000303" key="3">
    <source>
    </source>
</evidence>
<evidence type="ECO:0000305" key="4"/>
<evidence type="ECO:0000312" key="5">
    <source>
        <dbReference type="EMBL" id="AAF41586.1"/>
    </source>
</evidence>
<evidence type="ECO:0007744" key="6">
    <source>
        <dbReference type="PDB" id="3VK0"/>
    </source>
</evidence>
<gene>
    <name evidence="5" type="ordered locus">NMB1204</name>
</gene>